<proteinExistence type="evidence at transcript level"/>
<accession>Q32TF8</accession>
<accession>Q08CU1</accession>
<sequence length="748" mass="85457">MALPMLPGNSVNRNLGKDKFHKSQHFDYSNGVAMMVGTEKPGIGGDLLLGQSARAKYSRFPKGEGSGAPAWLAFDKQVLCFDAYFNEAVPQRREEKYRVRKCKIYFYLEDDTIQVVEPEFKNSGIPQGTLIRRHRIPLPAPKDDCFYNVHHFNINQEVLFYSRNFMITDCDPFTRNFLVKMGVRLNPPASTPADPYTTLRQELEENMKPLRPYERLDTLKQFLEHDRQVLRFYCYWDDSESMFGDPRELILHYFLADDTMEMYEVVPPNSGRDTVPKFLHRGKLPKHAPIPKRQPGEITDRTVLNVFGPVGQGGPYILDSLKTGALEEEFYKDSDLTIGAVINVWGRRVLICDCDYFTKEYYRSKYGIEDFPSISYKASPPPKPAKQVPPYTGFGSEEDSLCSCQGLLPKPPQKDFKKLMEKDRRGLVSNVLRFVGKMLTDSPVDKERVFIICFYLTDDTIAVFEPPQRNSGVIGGKFLERGRVKKPGQELFKSEMSEYFTAQDLYVGAHLLLNSQPFQLVDADDFTFSYMEQHADEFPKANIGTIISKVKSISEEQQKTVKQFFTMSDPSSTGSLPYESFRTLLADLDVELSEHEIMTLGRVYSVRQQPEVNVGLMLAVAQDHLKKKNFEKFSEMIQAFTHEDRDRCGQLSSKEARIICKAFRLPLSDDLLRALLEKFAGESEKIDYHAFLSGINWRENPVPAVLPEDTVKFDADWRGEAPEPAVKTINYSLLLEDVFGSATNINDS</sequence>
<organism>
    <name type="scientific">Danio rerio</name>
    <name type="common">Zebrafish</name>
    <name type="synonym">Brachydanio rerio</name>
    <dbReference type="NCBI Taxonomy" id="7955"/>
    <lineage>
        <taxon>Eukaryota</taxon>
        <taxon>Metazoa</taxon>
        <taxon>Chordata</taxon>
        <taxon>Craniata</taxon>
        <taxon>Vertebrata</taxon>
        <taxon>Euteleostomi</taxon>
        <taxon>Actinopterygii</taxon>
        <taxon>Neopterygii</taxon>
        <taxon>Teleostei</taxon>
        <taxon>Ostariophysi</taxon>
        <taxon>Cypriniformes</taxon>
        <taxon>Danionidae</taxon>
        <taxon>Danioninae</taxon>
        <taxon>Danio</taxon>
    </lineage>
</organism>
<keyword id="KW-0966">Cell projection</keyword>
<keyword id="KW-0963">Cytoplasm</keyword>
<keyword id="KW-0206">Cytoskeleton</keyword>
<keyword id="KW-1185">Reference proteome</keyword>
<keyword id="KW-0677">Repeat</keyword>
<evidence type="ECO:0000250" key="1">
    <source>
        <dbReference type="UniProtKB" id="A0A3Q1N1R0"/>
    </source>
</evidence>
<evidence type="ECO:0000255" key="2">
    <source>
        <dbReference type="PROSITE-ProRule" id="PRU00665"/>
    </source>
</evidence>
<evidence type="ECO:0000305" key="3"/>
<protein>
    <recommendedName>
        <fullName>EF-hand domain-containing family member C2</fullName>
    </recommendedName>
</protein>
<gene>
    <name type="primary">efhc2</name>
    <name type="ORF">zgc:152706</name>
</gene>
<name>EFHC2_DANRE</name>
<feature type="chain" id="PRO_0000251706" description="EF-hand domain-containing family member C2">
    <location>
        <begin position="1"/>
        <end position="748"/>
    </location>
</feature>
<feature type="domain" description="DM10 1" evidence="2">
    <location>
        <begin position="75"/>
        <end position="182"/>
    </location>
</feature>
<feature type="domain" description="DM10 2" evidence="2">
    <location>
        <begin position="226"/>
        <end position="366"/>
    </location>
</feature>
<feature type="domain" description="DM10 3" evidence="2">
    <location>
        <begin position="428"/>
        <end position="535"/>
    </location>
</feature>
<feature type="domain" description="EF-hand 1">
    <location>
        <begin position="556"/>
        <end position="591"/>
    </location>
</feature>
<feature type="domain" description="EF-hand 2">
    <location>
        <begin position="631"/>
        <end position="666"/>
    </location>
</feature>
<feature type="sequence conflict" description="In Ref. 1; AAX08048." evidence="3" ref="1">
    <original>A</original>
    <variation>D</variation>
    <location>
        <position position="88"/>
    </location>
</feature>
<feature type="sequence conflict" description="In Ref. 1; AAX08048." evidence="3" ref="1">
    <original>L</original>
    <variation>V</variation>
    <location>
        <position position="159"/>
    </location>
</feature>
<feature type="sequence conflict" description="In Ref. 1; AAX08048." evidence="3" ref="1">
    <original>V</original>
    <variation>I</variation>
    <location>
        <position position="179"/>
    </location>
</feature>
<feature type="sequence conflict" description="In Ref. 1; AAX08048." evidence="3" ref="1">
    <original>LEE</original>
    <variation>AK</variation>
    <location>
        <begin position="203"/>
        <end position="205"/>
    </location>
</feature>
<feature type="sequence conflict" description="In Ref. 1; AAX08048." evidence="3" ref="1">
    <original>R</original>
    <variation>Q</variation>
    <location>
        <position position="425"/>
    </location>
</feature>
<feature type="sequence conflict" description="In Ref. 1; AAX08048." evidence="3" ref="1">
    <original>T</original>
    <variation>K</variation>
    <location>
        <position position="560"/>
    </location>
</feature>
<dbReference type="EMBL" id="AY823393">
    <property type="protein sequence ID" value="AAX08048.1"/>
    <property type="status" value="ALT_SEQ"/>
    <property type="molecule type" value="mRNA"/>
</dbReference>
<dbReference type="EMBL" id="BC124091">
    <property type="protein sequence ID" value="AAI24092.1"/>
    <property type="molecule type" value="mRNA"/>
</dbReference>
<dbReference type="SMR" id="Q32TF8"/>
<dbReference type="FunCoup" id="Q32TF8">
    <property type="interactions" value="320"/>
</dbReference>
<dbReference type="STRING" id="7955.ENSDARP00000010992"/>
<dbReference type="PaxDb" id="7955-ENSDARP00000010992"/>
<dbReference type="AGR" id="ZFIN:ZDB-GENE-031001-10"/>
<dbReference type="ZFIN" id="ZDB-GENE-031001-10">
    <property type="gene designation" value="efhc2"/>
</dbReference>
<dbReference type="eggNOG" id="KOG0043">
    <property type="taxonomic scope" value="Eukaryota"/>
</dbReference>
<dbReference type="InParanoid" id="Q32TF8"/>
<dbReference type="PhylomeDB" id="Q32TF8"/>
<dbReference type="PRO" id="PR:Q32TF8"/>
<dbReference type="Proteomes" id="UP000000437">
    <property type="component" value="Unplaced"/>
</dbReference>
<dbReference type="GO" id="GO:0005879">
    <property type="term" value="C:axonemal microtubule"/>
    <property type="evidence" value="ECO:0000250"/>
    <property type="project" value="UniProtKB"/>
</dbReference>
<dbReference type="GO" id="GO:1903251">
    <property type="term" value="P:multi-ciliated epithelial cell differentiation"/>
    <property type="evidence" value="ECO:0000315"/>
    <property type="project" value="ZFIN"/>
</dbReference>
<dbReference type="GO" id="GO:0010975">
    <property type="term" value="P:regulation of neuron projection development"/>
    <property type="evidence" value="ECO:0000318"/>
    <property type="project" value="GO_Central"/>
</dbReference>
<dbReference type="GO" id="GO:0039010">
    <property type="term" value="P:specification of pronephric distal tubule identity"/>
    <property type="evidence" value="ECO:0000315"/>
    <property type="project" value="ZFIN"/>
</dbReference>
<dbReference type="FunFam" id="2.30.29.170:FF:000002">
    <property type="entry name" value="EF-hand domain (C-terminal) containing 1"/>
    <property type="match status" value="1"/>
</dbReference>
<dbReference type="FunFam" id="2.30.29.170:FF:000003">
    <property type="entry name" value="EF-hand domain (C-terminal) containing 1"/>
    <property type="match status" value="1"/>
</dbReference>
<dbReference type="FunFam" id="2.30.29.170:FF:000001">
    <property type="entry name" value="EF-hand domain containing 1"/>
    <property type="match status" value="1"/>
</dbReference>
<dbReference type="FunFam" id="1.10.238.10:FF:000375">
    <property type="entry name" value="EF-hand domain-containing family member C2"/>
    <property type="match status" value="1"/>
</dbReference>
<dbReference type="Gene3D" id="2.30.29.170">
    <property type="match status" value="3"/>
</dbReference>
<dbReference type="Gene3D" id="1.10.238.10">
    <property type="entry name" value="EF-hand"/>
    <property type="match status" value="1"/>
</dbReference>
<dbReference type="InterPro" id="IPR006602">
    <property type="entry name" value="DM10_dom"/>
</dbReference>
<dbReference type="InterPro" id="IPR011992">
    <property type="entry name" value="EF-hand-dom_pair"/>
</dbReference>
<dbReference type="InterPro" id="IPR040193">
    <property type="entry name" value="EFHC1/EFHC2/EFHB"/>
</dbReference>
<dbReference type="PANTHER" id="PTHR12086">
    <property type="entry name" value="EF-HAND DOMAIN C-TERMINAL CONTAINING PROTEIN"/>
    <property type="match status" value="1"/>
</dbReference>
<dbReference type="PANTHER" id="PTHR12086:SF11">
    <property type="entry name" value="EF-HAND DOMAIN-CONTAINING FAMILY MEMBER C2"/>
    <property type="match status" value="1"/>
</dbReference>
<dbReference type="Pfam" id="PF06565">
    <property type="entry name" value="DM10_dom"/>
    <property type="match status" value="3"/>
</dbReference>
<dbReference type="SMART" id="SM00676">
    <property type="entry name" value="DM10"/>
    <property type="match status" value="3"/>
</dbReference>
<dbReference type="SUPFAM" id="SSF47473">
    <property type="entry name" value="EF-hand"/>
    <property type="match status" value="1"/>
</dbReference>
<dbReference type="PROSITE" id="PS51336">
    <property type="entry name" value="DM10"/>
    <property type="match status" value="3"/>
</dbReference>
<reference key="1">
    <citation type="submission" date="2004-10" db="EMBL/GenBank/DDBJ databases">
        <title>The EFHC family.</title>
        <authorList>
            <person name="Gu W."/>
            <person name="Steinlein O.K."/>
        </authorList>
    </citation>
    <scope>NUCLEOTIDE SEQUENCE [MRNA]</scope>
</reference>
<reference key="2">
    <citation type="submission" date="2006-09" db="EMBL/GenBank/DDBJ databases">
        <authorList>
            <consortium name="NIH - Zebrafish Gene Collection (ZGC) project"/>
        </authorList>
    </citation>
    <scope>NUCLEOTIDE SEQUENCE [LARGE SCALE MRNA]</scope>
    <source>
        <tissue>Olfactory epithelium</tissue>
    </source>
</reference>
<comment type="function">
    <text evidence="1">Microtubule inner protein (MIP) part of the dynein-decorated doublet microtubules (DMTs) in cilia axoneme, which is required for motile cilia beating.</text>
</comment>
<comment type="subcellular location">
    <subcellularLocation>
        <location evidence="1">Cytoplasm</location>
        <location evidence="1">Cytoskeleton</location>
        <location evidence="1">Cilium axoneme</location>
    </subcellularLocation>
</comment>
<comment type="sequence caution" evidence="3">
    <conflict type="frameshift">
        <sequence resource="EMBL-CDS" id="AAX08048"/>
    </conflict>
</comment>
<comment type="sequence caution" evidence="3">
    <conflict type="miscellaneous discrepancy">
        <sequence resource="EMBL-CDS" id="AAX08048"/>
    </conflict>
    <text>Intron retention.</text>
</comment>